<comment type="function">
    <text evidence="1">Required for maturation of urease via the functional incorporation of the urease nickel metallocenter.</text>
</comment>
<comment type="subunit">
    <text evidence="1">UreD, UreF and UreG form a complex that acts as a GTP-hydrolysis-dependent molecular chaperone, activating the urease apoprotein by helping to assemble the nickel containing metallocenter of UreC. The UreE protein probably delivers the nickel.</text>
</comment>
<comment type="subcellular location">
    <subcellularLocation>
        <location evidence="1">Cytoplasm</location>
    </subcellularLocation>
</comment>
<comment type="similarity">
    <text evidence="1">Belongs to the UreF family.</text>
</comment>
<reference key="1">
    <citation type="journal article" date="2014" name="Stand. Genomic Sci.">
        <title>Complete genome sequence of Burkholderia phymatum STM815(T), a broad host range and efficient nitrogen-fixing symbiont of Mimosa species.</title>
        <authorList>
            <person name="Moulin L."/>
            <person name="Klonowska A."/>
            <person name="Caroline B."/>
            <person name="Booth K."/>
            <person name="Vriezen J.A."/>
            <person name="Melkonian R."/>
            <person name="James E.K."/>
            <person name="Young J.P."/>
            <person name="Bena G."/>
            <person name="Hauser L."/>
            <person name="Land M."/>
            <person name="Kyrpides N."/>
            <person name="Bruce D."/>
            <person name="Chain P."/>
            <person name="Copeland A."/>
            <person name="Pitluck S."/>
            <person name="Woyke T."/>
            <person name="Lizotte-Waniewski M."/>
            <person name="Bristow J."/>
            <person name="Riley M."/>
        </authorList>
    </citation>
    <scope>NUCLEOTIDE SEQUENCE [LARGE SCALE GENOMIC DNA]</scope>
    <source>
        <strain>DSM 17167 / CIP 108236 / LMG 21445 / STM815</strain>
    </source>
</reference>
<accession>B2JF69</accession>
<evidence type="ECO:0000255" key="1">
    <source>
        <dbReference type="HAMAP-Rule" id="MF_01385"/>
    </source>
</evidence>
<sequence length="226" mass="24377">MRIAELTALLHLASPALPIGAFSYSQGLEAAIEAQFITDADTACAWIRSGLSNVLAHGELPFLAHQIERWRTHDAAALIEGNREFLASRESAELRRETEQMGWSLRQLCASLEWGDAARRATLASMAPIAQPTAFAFAAIAHDAATDAALAAYAFSWVENQAAAALKAVPLGQLAGQRIIVALREPIDAAVRQALSTSPDDINTFAPQLGILSARHESQYSRLFRS</sequence>
<protein>
    <recommendedName>
        <fullName evidence="1">Urease accessory protein UreF</fullName>
    </recommendedName>
</protein>
<gene>
    <name evidence="1" type="primary">ureF</name>
    <name type="ordered locus">Bphy_2262</name>
</gene>
<dbReference type="EMBL" id="CP001043">
    <property type="protein sequence ID" value="ACC71437.1"/>
    <property type="molecule type" value="Genomic_DNA"/>
</dbReference>
<dbReference type="RefSeq" id="WP_012401643.1">
    <property type="nucleotide sequence ID" value="NC_010622.1"/>
</dbReference>
<dbReference type="SMR" id="B2JF69"/>
<dbReference type="STRING" id="391038.Bphy_2262"/>
<dbReference type="KEGG" id="bph:Bphy_2262"/>
<dbReference type="eggNOG" id="COG0830">
    <property type="taxonomic scope" value="Bacteria"/>
</dbReference>
<dbReference type="HOGENOM" id="CLU_049215_2_1_4"/>
<dbReference type="OrthoDB" id="9798772at2"/>
<dbReference type="Proteomes" id="UP000001192">
    <property type="component" value="Chromosome 1"/>
</dbReference>
<dbReference type="GO" id="GO:0005737">
    <property type="term" value="C:cytoplasm"/>
    <property type="evidence" value="ECO:0007669"/>
    <property type="project" value="UniProtKB-SubCell"/>
</dbReference>
<dbReference type="GO" id="GO:0016151">
    <property type="term" value="F:nickel cation binding"/>
    <property type="evidence" value="ECO:0007669"/>
    <property type="project" value="UniProtKB-UniRule"/>
</dbReference>
<dbReference type="Gene3D" id="1.10.4190.10">
    <property type="entry name" value="Urease accessory protein UreF"/>
    <property type="match status" value="1"/>
</dbReference>
<dbReference type="HAMAP" id="MF_01385">
    <property type="entry name" value="UreF"/>
    <property type="match status" value="1"/>
</dbReference>
<dbReference type="InterPro" id="IPR002639">
    <property type="entry name" value="UreF"/>
</dbReference>
<dbReference type="InterPro" id="IPR038277">
    <property type="entry name" value="UreF_sf"/>
</dbReference>
<dbReference type="PANTHER" id="PTHR33620">
    <property type="entry name" value="UREASE ACCESSORY PROTEIN F"/>
    <property type="match status" value="1"/>
</dbReference>
<dbReference type="PANTHER" id="PTHR33620:SF1">
    <property type="entry name" value="UREASE ACCESSORY PROTEIN F"/>
    <property type="match status" value="1"/>
</dbReference>
<dbReference type="Pfam" id="PF01730">
    <property type="entry name" value="UreF"/>
    <property type="match status" value="1"/>
</dbReference>
<dbReference type="PIRSF" id="PIRSF009467">
    <property type="entry name" value="Ureas_acces_UreF"/>
    <property type="match status" value="1"/>
</dbReference>
<name>UREF_PARP8</name>
<proteinExistence type="inferred from homology"/>
<feature type="chain" id="PRO_1000145111" description="Urease accessory protein UreF">
    <location>
        <begin position="1"/>
        <end position="226"/>
    </location>
</feature>
<keyword id="KW-0143">Chaperone</keyword>
<keyword id="KW-0963">Cytoplasm</keyword>
<keyword id="KW-0996">Nickel insertion</keyword>
<keyword id="KW-1185">Reference proteome</keyword>
<organism>
    <name type="scientific">Paraburkholderia phymatum (strain DSM 17167 / CIP 108236 / LMG 21445 / STM815)</name>
    <name type="common">Burkholderia phymatum</name>
    <dbReference type="NCBI Taxonomy" id="391038"/>
    <lineage>
        <taxon>Bacteria</taxon>
        <taxon>Pseudomonadati</taxon>
        <taxon>Pseudomonadota</taxon>
        <taxon>Betaproteobacteria</taxon>
        <taxon>Burkholderiales</taxon>
        <taxon>Burkholderiaceae</taxon>
        <taxon>Paraburkholderia</taxon>
    </lineage>
</organism>